<protein>
    <recommendedName>
        <fullName evidence="4">Glycine-rich RNA-binding protein 1</fullName>
    </recommendedName>
</protein>
<sequence length="175" mass="18115">MAAKVYVGNLSWNTTDDSLAHAFSTYGQLTDYIVMKDRETGRSRGFGFVTFATQAEADAAIAALNEQELDGRRIRVNMANSRPAGGMGGGYGGVTGQYGANAYGAQGGYGGYGGQPGGFQQPGGFQQQGGYPQQGGYGGYQQPGFQPQQGGYGAPQQGYGAPQQGGYGGYNGQSQ</sequence>
<reference key="1">
    <citation type="journal article" date="2006" name="Nature">
        <title>Insights from the genome of the biotrophic fungal plant pathogen Ustilago maydis.</title>
        <authorList>
            <person name="Kaemper J."/>
            <person name="Kahmann R."/>
            <person name="Boelker M."/>
            <person name="Ma L.-J."/>
            <person name="Brefort T."/>
            <person name="Saville B.J."/>
            <person name="Banuett F."/>
            <person name="Kronstad J.W."/>
            <person name="Gold S.E."/>
            <person name="Mueller O."/>
            <person name="Perlin M.H."/>
            <person name="Woesten H.A.B."/>
            <person name="de Vries R."/>
            <person name="Ruiz-Herrera J."/>
            <person name="Reynaga-Pena C.G."/>
            <person name="Snetselaar K."/>
            <person name="McCann M."/>
            <person name="Perez-Martin J."/>
            <person name="Feldbruegge M."/>
            <person name="Basse C.W."/>
            <person name="Steinberg G."/>
            <person name="Ibeas J.I."/>
            <person name="Holloman W."/>
            <person name="Guzman P."/>
            <person name="Farman M.L."/>
            <person name="Stajich J.E."/>
            <person name="Sentandreu R."/>
            <person name="Gonzalez-Prieto J.M."/>
            <person name="Kennell J.C."/>
            <person name="Molina L."/>
            <person name="Schirawski J."/>
            <person name="Mendoza-Mendoza A."/>
            <person name="Greilinger D."/>
            <person name="Muench K."/>
            <person name="Roessel N."/>
            <person name="Scherer M."/>
            <person name="Vranes M."/>
            <person name="Ladendorf O."/>
            <person name="Vincon V."/>
            <person name="Fuchs U."/>
            <person name="Sandrock B."/>
            <person name="Meng S."/>
            <person name="Ho E.C.H."/>
            <person name="Cahill M.J."/>
            <person name="Boyce K.J."/>
            <person name="Klose J."/>
            <person name="Klosterman S.J."/>
            <person name="Deelstra H.J."/>
            <person name="Ortiz-Castellanos L."/>
            <person name="Li W."/>
            <person name="Sanchez-Alonso P."/>
            <person name="Schreier P.H."/>
            <person name="Haeuser-Hahn I."/>
            <person name="Vaupel M."/>
            <person name="Koopmann E."/>
            <person name="Friedrich G."/>
            <person name="Voss H."/>
            <person name="Schlueter T."/>
            <person name="Margolis J."/>
            <person name="Platt D."/>
            <person name="Swimmer C."/>
            <person name="Gnirke A."/>
            <person name="Chen F."/>
            <person name="Vysotskaia V."/>
            <person name="Mannhaupt G."/>
            <person name="Gueldener U."/>
            <person name="Muensterkoetter M."/>
            <person name="Haase D."/>
            <person name="Oesterheld M."/>
            <person name="Mewes H.-W."/>
            <person name="Mauceli E.W."/>
            <person name="DeCaprio D."/>
            <person name="Wade C.M."/>
            <person name="Butler J."/>
            <person name="Young S.K."/>
            <person name="Jaffe D.B."/>
            <person name="Calvo S.E."/>
            <person name="Nusbaum C."/>
            <person name="Galagan J.E."/>
            <person name="Birren B.W."/>
        </authorList>
    </citation>
    <scope>NUCLEOTIDE SEQUENCE [LARGE SCALE GENOMIC DNA]</scope>
    <source>
        <strain>DSM 14603 / FGSC 9021 / UM521</strain>
    </source>
</reference>
<reference key="2">
    <citation type="submission" date="2014-09" db="EMBL/GenBank/DDBJ databases">
        <authorList>
            <person name="Gueldener U."/>
            <person name="Muensterkoetter M."/>
            <person name="Walter M.C."/>
            <person name="Mannhaupt G."/>
            <person name="Kahmann R."/>
        </authorList>
    </citation>
    <scope>GENOME REANNOTATION</scope>
    <source>
        <strain>DSM 14603 / FGSC 9021 / UM521</strain>
    </source>
</reference>
<reference key="3">
    <citation type="journal article" date="2019" name="EMBO Rep.">
        <title>The key protein of endosomal mRNP transport Rrm4 binds translational landmark sites of cargo mRNAs.</title>
        <authorList>
            <person name="Olgeiser L."/>
            <person name="Haag C."/>
            <person name="Boerner S."/>
            <person name="Ule J."/>
            <person name="Busch A."/>
            <person name="Koepke J."/>
            <person name="Koenig J."/>
            <person name="Feldbruegge M."/>
            <person name="Zarnack K."/>
        </authorList>
    </citation>
    <scope>FUNCTION</scope>
    <scope>DISRUPTION PHENOTYPE</scope>
    <scope>SUBUNIT</scope>
    <scope>SUBCELLULAR LOCATION</scope>
    <scope>MRNA-BINDING</scope>
</reference>
<comment type="function">
    <text evidence="3">Component of endosomal mRNA transport that regulates polarity of the infectious hyphae by transporting a broad spectrum of cargo mRNAs from the nucleus to cell poles.</text>
</comment>
<comment type="subunit">
    <text evidence="3">Part of large ribonucleoprotein complexes (mRNPs) containing RNA-binding proteins RRM4 and PAB1, endosome-binding protein UPA1, core scaffold protein UPA2 and associated factor GRP1.</text>
</comment>
<comment type="subcellular location">
    <subcellularLocation>
        <location evidence="3">Endosome</location>
    </subcellularLocation>
    <text evidence="3">The endosomal localization of GRP1 depends on RRM4.</text>
</comment>
<comment type="disruption phenotype">
    <text evidence="3">In the yeast form, results in slower proliferation as well as increased cell size (PubMed:30552148). Does not cause an increased amount of bipolar cells and leads to significantly longer hyphae and empty sections at the basal pole (PubMed:30552148).</text>
</comment>
<comment type="similarity">
    <text evidence="5">Belongs to the glycine-rich RNA-binding protein family.</text>
</comment>
<comment type="sequence caution" evidence="5">
    <conflict type="erroneous gene model prediction">
        <sequence resource="EMBL-CDS" id="KIS69898"/>
    </conflict>
</comment>
<name>GRP1_MYCMD</name>
<proteinExistence type="evidence at protein level"/>
<accession>A0A0D1C8Z4</accession>
<accession>A0A0D1CTT4</accession>
<organism>
    <name type="scientific">Mycosarcoma maydis</name>
    <name type="common">Corn smut fungus</name>
    <name type="synonym">Ustilago maydis</name>
    <dbReference type="NCBI Taxonomy" id="5270"/>
    <lineage>
        <taxon>Eukaryota</taxon>
        <taxon>Fungi</taxon>
        <taxon>Dikarya</taxon>
        <taxon>Basidiomycota</taxon>
        <taxon>Ustilaginomycotina</taxon>
        <taxon>Ustilaginomycetes</taxon>
        <taxon>Ustilaginales</taxon>
        <taxon>Ustilaginaceae</taxon>
        <taxon>Mycosarcoma</taxon>
    </lineage>
</organism>
<evidence type="ECO:0000255" key="1">
    <source>
        <dbReference type="PROSITE-ProRule" id="PRU00176"/>
    </source>
</evidence>
<evidence type="ECO:0000256" key="2">
    <source>
        <dbReference type="SAM" id="MobiDB-lite"/>
    </source>
</evidence>
<evidence type="ECO:0000269" key="3">
    <source>
    </source>
</evidence>
<evidence type="ECO:0000303" key="4">
    <source>
    </source>
</evidence>
<evidence type="ECO:0000305" key="5"/>
<feature type="chain" id="PRO_0000454343" description="Glycine-rich RNA-binding protein 1">
    <location>
        <begin position="1"/>
        <end position="175"/>
    </location>
</feature>
<feature type="domain" description="RRM" evidence="1">
    <location>
        <begin position="3"/>
        <end position="81"/>
    </location>
</feature>
<feature type="region of interest" description="Disordered" evidence="2">
    <location>
        <begin position="114"/>
        <end position="175"/>
    </location>
</feature>
<feature type="compositionally biased region" description="Low complexity" evidence="2">
    <location>
        <begin position="122"/>
        <end position="131"/>
    </location>
</feature>
<feature type="compositionally biased region" description="Gly residues" evidence="2">
    <location>
        <begin position="132"/>
        <end position="141"/>
    </location>
</feature>
<feature type="compositionally biased region" description="Low complexity" evidence="2">
    <location>
        <begin position="142"/>
        <end position="162"/>
    </location>
</feature>
<feature type="compositionally biased region" description="Gly residues" evidence="2">
    <location>
        <begin position="163"/>
        <end position="175"/>
    </location>
</feature>
<dbReference type="EMBL" id="CM003144">
    <property type="protein sequence ID" value="KIS69898.1"/>
    <property type="status" value="ALT_SEQ"/>
    <property type="molecule type" value="Genomic_DNA"/>
</dbReference>
<dbReference type="EMBL" id="CM003144">
    <property type="protein sequence ID" value="KIS69897.1"/>
    <property type="molecule type" value="Genomic_DNA"/>
</dbReference>
<dbReference type="RefSeq" id="XP_011388704.1">
    <property type="nucleotide sequence ID" value="XM_011390402.1"/>
</dbReference>
<dbReference type="RefSeq" id="XP_011388705.1">
    <property type="nucleotide sequence ID" value="XM_011390403.1"/>
</dbReference>
<dbReference type="SMR" id="A0A0D1C8Z4"/>
<dbReference type="STRING" id="237631.A0A0D1CTT4"/>
<dbReference type="EnsemblFungi" id="KIS69897">
    <property type="protein sequence ID" value="KIS69897"/>
    <property type="gene ID" value="UMAG_02412"/>
</dbReference>
<dbReference type="EnsemblFungi" id="KIS69898">
    <property type="protein sequence ID" value="KIS69898"/>
    <property type="gene ID" value="UMAG_02412"/>
</dbReference>
<dbReference type="GeneID" id="23563163"/>
<dbReference type="KEGG" id="uma:UMAG_02412"/>
<dbReference type="VEuPathDB" id="FungiDB:UMAG_02412"/>
<dbReference type="eggNOG" id="KOG0118">
    <property type="taxonomic scope" value="Eukaryota"/>
</dbReference>
<dbReference type="InParanoid" id="A0A0D1C8Z4"/>
<dbReference type="OrthoDB" id="439808at2759"/>
<dbReference type="Proteomes" id="UP000000561">
    <property type="component" value="Chromosome 5"/>
</dbReference>
<dbReference type="GO" id="GO:0005768">
    <property type="term" value="C:endosome"/>
    <property type="evidence" value="ECO:0007669"/>
    <property type="project" value="UniProtKB-SubCell"/>
</dbReference>
<dbReference type="GO" id="GO:0003723">
    <property type="term" value="F:RNA binding"/>
    <property type="evidence" value="ECO:0007669"/>
    <property type="project" value="UniProtKB-KW"/>
</dbReference>
<dbReference type="GO" id="GO:0051028">
    <property type="term" value="P:mRNA transport"/>
    <property type="evidence" value="ECO:0007669"/>
    <property type="project" value="UniProtKB-KW"/>
</dbReference>
<dbReference type="CDD" id="cd21608">
    <property type="entry name" value="RRM2_NsCP33_like"/>
    <property type="match status" value="1"/>
</dbReference>
<dbReference type="FunFam" id="3.30.70.330:FF:000634">
    <property type="entry name" value="Related to glycine-rich RNA-binding protein"/>
    <property type="match status" value="1"/>
</dbReference>
<dbReference type="Gene3D" id="3.30.70.330">
    <property type="match status" value="1"/>
</dbReference>
<dbReference type="InterPro" id="IPR012677">
    <property type="entry name" value="Nucleotide-bd_a/b_plait_sf"/>
</dbReference>
<dbReference type="InterPro" id="IPR035979">
    <property type="entry name" value="RBD_domain_sf"/>
</dbReference>
<dbReference type="InterPro" id="IPR048289">
    <property type="entry name" value="RRM2_NsCP33-like"/>
</dbReference>
<dbReference type="InterPro" id="IPR000504">
    <property type="entry name" value="RRM_dom"/>
</dbReference>
<dbReference type="InterPro" id="IPR052462">
    <property type="entry name" value="SLIRP/GR-RBP-like"/>
</dbReference>
<dbReference type="PANTHER" id="PTHR48027">
    <property type="entry name" value="HETEROGENEOUS NUCLEAR RIBONUCLEOPROTEIN 87F-RELATED"/>
    <property type="match status" value="1"/>
</dbReference>
<dbReference type="Pfam" id="PF00076">
    <property type="entry name" value="RRM_1"/>
    <property type="match status" value="1"/>
</dbReference>
<dbReference type="SMART" id="SM00360">
    <property type="entry name" value="RRM"/>
    <property type="match status" value="1"/>
</dbReference>
<dbReference type="SUPFAM" id="SSF54928">
    <property type="entry name" value="RNA-binding domain, RBD"/>
    <property type="match status" value="1"/>
</dbReference>
<dbReference type="PROSITE" id="PS50102">
    <property type="entry name" value="RRM"/>
    <property type="match status" value="1"/>
</dbReference>
<keyword id="KW-0967">Endosome</keyword>
<keyword id="KW-0509">mRNA transport</keyword>
<keyword id="KW-1185">Reference proteome</keyword>
<keyword id="KW-0694">RNA-binding</keyword>
<keyword id="KW-0813">Transport</keyword>
<gene>
    <name evidence="4" type="primary">GRP1</name>
    <name type="ORF">UMAG_02412</name>
</gene>